<dbReference type="EC" id="3.5.1.96" evidence="1"/>
<dbReference type="EMBL" id="CP001120">
    <property type="protein sequence ID" value="ACF69940.1"/>
    <property type="molecule type" value="Genomic_DNA"/>
</dbReference>
<dbReference type="RefSeq" id="WP_000368459.1">
    <property type="nucleotide sequence ID" value="NC_011083.1"/>
</dbReference>
<dbReference type="SMR" id="B4TGE4"/>
<dbReference type="KEGG" id="seh:SeHA_C1434"/>
<dbReference type="HOGENOM" id="CLU_071608_0_0_6"/>
<dbReference type="UniPathway" id="UPA00185">
    <property type="reaction ID" value="UER00283"/>
</dbReference>
<dbReference type="Proteomes" id="UP000001866">
    <property type="component" value="Chromosome"/>
</dbReference>
<dbReference type="GO" id="GO:0016788">
    <property type="term" value="F:hydrolase activity, acting on ester bonds"/>
    <property type="evidence" value="ECO:0007669"/>
    <property type="project" value="UniProtKB-UniRule"/>
</dbReference>
<dbReference type="GO" id="GO:0009017">
    <property type="term" value="F:succinylglutamate desuccinylase activity"/>
    <property type="evidence" value="ECO:0007669"/>
    <property type="project" value="UniProtKB-EC"/>
</dbReference>
<dbReference type="GO" id="GO:0008270">
    <property type="term" value="F:zinc ion binding"/>
    <property type="evidence" value="ECO:0007669"/>
    <property type="project" value="UniProtKB-UniRule"/>
</dbReference>
<dbReference type="GO" id="GO:0019544">
    <property type="term" value="P:arginine catabolic process to glutamate"/>
    <property type="evidence" value="ECO:0007669"/>
    <property type="project" value="UniProtKB-UniRule"/>
</dbReference>
<dbReference type="GO" id="GO:0019545">
    <property type="term" value="P:arginine catabolic process to succinate"/>
    <property type="evidence" value="ECO:0007669"/>
    <property type="project" value="UniProtKB-UniRule"/>
</dbReference>
<dbReference type="CDD" id="cd03855">
    <property type="entry name" value="M14_ASTE"/>
    <property type="match status" value="1"/>
</dbReference>
<dbReference type="FunFam" id="3.40.630.10:FF:000017">
    <property type="entry name" value="Succinylglutamate desuccinylase"/>
    <property type="match status" value="1"/>
</dbReference>
<dbReference type="Gene3D" id="3.40.630.10">
    <property type="entry name" value="Zn peptidases"/>
    <property type="match status" value="1"/>
</dbReference>
<dbReference type="HAMAP" id="MF_00767">
    <property type="entry name" value="Arg_catab_AstE"/>
    <property type="match status" value="1"/>
</dbReference>
<dbReference type="InterPro" id="IPR050178">
    <property type="entry name" value="AspA/AstE_fam"/>
</dbReference>
<dbReference type="InterPro" id="IPR055438">
    <property type="entry name" value="AstE_AspA_cat"/>
</dbReference>
<dbReference type="InterPro" id="IPR007036">
    <property type="entry name" value="Aste_AspA_hybrid_dom"/>
</dbReference>
<dbReference type="InterPro" id="IPR016681">
    <property type="entry name" value="SuccinylGlu_desuccinylase"/>
</dbReference>
<dbReference type="NCBIfam" id="TIGR03242">
    <property type="entry name" value="arg_catab_astE"/>
    <property type="match status" value="1"/>
</dbReference>
<dbReference type="NCBIfam" id="NF003706">
    <property type="entry name" value="PRK05324.1"/>
    <property type="match status" value="1"/>
</dbReference>
<dbReference type="PANTHER" id="PTHR15162">
    <property type="entry name" value="ASPARTOACYLASE"/>
    <property type="match status" value="1"/>
</dbReference>
<dbReference type="PANTHER" id="PTHR15162:SF7">
    <property type="entry name" value="SUCCINYLGLUTAMATE DESUCCINYLASE"/>
    <property type="match status" value="1"/>
</dbReference>
<dbReference type="Pfam" id="PF24827">
    <property type="entry name" value="AstE_AspA_cat"/>
    <property type="match status" value="1"/>
</dbReference>
<dbReference type="Pfam" id="PF04952">
    <property type="entry name" value="AstE_AspA_hybrid"/>
    <property type="match status" value="1"/>
</dbReference>
<dbReference type="PIRSF" id="PIRSF017020">
    <property type="entry name" value="AstE"/>
    <property type="match status" value="1"/>
</dbReference>
<dbReference type="SUPFAM" id="SSF53187">
    <property type="entry name" value="Zn-dependent exopeptidases"/>
    <property type="match status" value="1"/>
</dbReference>
<sequence length="322" mass="35537">MDNFLALTLSGTTPRVTQGKGAGFRWRWLGHGLLELTPDAPVDRALILSAGIHGNETAPVEMLDRLLSALFSGSLTLTWRVLVVLGNPQALTAGIRYGHSDMNRMFGGRWQSFAESDETRRARELELSLETFFSSGQARVRWHLDLHTAIRGSHHLRFGVLPQRDRPWETDFLAWLGAAGLEALVFHQAPGGTFTHFSSEHFGALSCTLELGKALPFGQNDLTQFNVTSQALSALLSGVETSTSFSPPLRYRVVSQITRHSDKFALYMDAQTLNFTAFAKGTLLAEEGDKRVTVTHDVEYVLFPNPSVACGLRAGLMLERLP</sequence>
<evidence type="ECO:0000255" key="1">
    <source>
        <dbReference type="HAMAP-Rule" id="MF_00767"/>
    </source>
</evidence>
<gene>
    <name evidence="1" type="primary">astE</name>
    <name type="ordered locus">SeHA_C1434</name>
</gene>
<protein>
    <recommendedName>
        <fullName evidence="1">Succinylglutamate desuccinylase</fullName>
        <ecNumber evidence="1">3.5.1.96</ecNumber>
    </recommendedName>
</protein>
<keyword id="KW-0056">Arginine metabolism</keyword>
<keyword id="KW-0378">Hydrolase</keyword>
<keyword id="KW-0479">Metal-binding</keyword>
<keyword id="KW-0862">Zinc</keyword>
<feature type="chain" id="PRO_1000133642" description="Succinylglutamate desuccinylase">
    <location>
        <begin position="1"/>
        <end position="322"/>
    </location>
</feature>
<feature type="active site" evidence="1">
    <location>
        <position position="210"/>
    </location>
</feature>
<feature type="binding site" evidence="1">
    <location>
        <position position="53"/>
    </location>
    <ligand>
        <name>Zn(2+)</name>
        <dbReference type="ChEBI" id="CHEBI:29105"/>
    </ligand>
</feature>
<feature type="binding site" evidence="1">
    <location>
        <position position="56"/>
    </location>
    <ligand>
        <name>Zn(2+)</name>
        <dbReference type="ChEBI" id="CHEBI:29105"/>
    </ligand>
</feature>
<feature type="binding site" evidence="1">
    <location>
        <position position="147"/>
    </location>
    <ligand>
        <name>Zn(2+)</name>
        <dbReference type="ChEBI" id="CHEBI:29105"/>
    </ligand>
</feature>
<organism>
    <name type="scientific">Salmonella heidelberg (strain SL476)</name>
    <dbReference type="NCBI Taxonomy" id="454169"/>
    <lineage>
        <taxon>Bacteria</taxon>
        <taxon>Pseudomonadati</taxon>
        <taxon>Pseudomonadota</taxon>
        <taxon>Gammaproteobacteria</taxon>
        <taxon>Enterobacterales</taxon>
        <taxon>Enterobacteriaceae</taxon>
        <taxon>Salmonella</taxon>
    </lineage>
</organism>
<reference key="1">
    <citation type="journal article" date="2011" name="J. Bacteriol.">
        <title>Comparative genomics of 28 Salmonella enterica isolates: evidence for CRISPR-mediated adaptive sublineage evolution.</title>
        <authorList>
            <person name="Fricke W.F."/>
            <person name="Mammel M.K."/>
            <person name="McDermott P.F."/>
            <person name="Tartera C."/>
            <person name="White D.G."/>
            <person name="Leclerc J.E."/>
            <person name="Ravel J."/>
            <person name="Cebula T.A."/>
        </authorList>
    </citation>
    <scope>NUCLEOTIDE SEQUENCE [LARGE SCALE GENOMIC DNA]</scope>
    <source>
        <strain>SL476</strain>
    </source>
</reference>
<proteinExistence type="inferred from homology"/>
<comment type="function">
    <text evidence="1">Transforms N(2)-succinylglutamate into succinate and glutamate.</text>
</comment>
<comment type="catalytic activity">
    <reaction evidence="1">
        <text>N-succinyl-L-glutamate + H2O = L-glutamate + succinate</text>
        <dbReference type="Rhea" id="RHEA:15169"/>
        <dbReference type="ChEBI" id="CHEBI:15377"/>
        <dbReference type="ChEBI" id="CHEBI:29985"/>
        <dbReference type="ChEBI" id="CHEBI:30031"/>
        <dbReference type="ChEBI" id="CHEBI:58763"/>
        <dbReference type="EC" id="3.5.1.96"/>
    </reaction>
</comment>
<comment type="cofactor">
    <cofactor evidence="1">
        <name>Zn(2+)</name>
        <dbReference type="ChEBI" id="CHEBI:29105"/>
    </cofactor>
    <text evidence="1">Binds 1 zinc ion per subunit.</text>
</comment>
<comment type="pathway">
    <text evidence="1">Amino-acid degradation; L-arginine degradation via AST pathway; L-glutamate and succinate from L-arginine: step 5/5.</text>
</comment>
<comment type="similarity">
    <text evidence="1">Belongs to the AspA/AstE family. Succinylglutamate desuccinylase subfamily.</text>
</comment>
<name>ASTE_SALHS</name>
<accession>B4TGE4</accession>